<protein>
    <recommendedName>
        <fullName>Probable S-adenosylmethionine synthase</fullName>
        <shortName>AdoMet synthase</shortName>
        <ecNumber evidence="3">2.5.1.6</ecNumber>
    </recommendedName>
    <alternativeName>
        <fullName>Methionine adenosyltransferase</fullName>
        <shortName>MAT</shortName>
    </alternativeName>
    <alternativeName>
        <fullName>Spot 178</fullName>
    </alternativeName>
</protein>
<organism>
    <name type="scientific">Zea mays</name>
    <name type="common">Maize</name>
    <dbReference type="NCBI Taxonomy" id="4577"/>
    <lineage>
        <taxon>Eukaryota</taxon>
        <taxon>Viridiplantae</taxon>
        <taxon>Streptophyta</taxon>
        <taxon>Embryophyta</taxon>
        <taxon>Tracheophyta</taxon>
        <taxon>Spermatophyta</taxon>
        <taxon>Magnoliopsida</taxon>
        <taxon>Liliopsida</taxon>
        <taxon>Poales</taxon>
        <taxon>Poaceae</taxon>
        <taxon>PACMAD clade</taxon>
        <taxon>Panicoideae</taxon>
        <taxon>Andropogonodae</taxon>
        <taxon>Andropogoneae</taxon>
        <taxon>Tripsacinae</taxon>
        <taxon>Zea</taxon>
    </lineage>
</organism>
<proteinExistence type="evidence at protein level"/>
<accession>P80616</accession>
<dbReference type="EC" id="2.5.1.6" evidence="3"/>
<dbReference type="STRING" id="4577.P80616"/>
<dbReference type="MaizeGDB" id="123938"/>
<dbReference type="eggNOG" id="KOG1506">
    <property type="taxonomic scope" value="Eukaryota"/>
</dbReference>
<dbReference type="InParanoid" id="P80616"/>
<dbReference type="UniPathway" id="UPA00315">
    <property type="reaction ID" value="UER00080"/>
</dbReference>
<dbReference type="Proteomes" id="UP000007305">
    <property type="component" value="Unplaced"/>
</dbReference>
<dbReference type="GO" id="GO:0005737">
    <property type="term" value="C:cytoplasm"/>
    <property type="evidence" value="ECO:0007669"/>
    <property type="project" value="UniProtKB-SubCell"/>
</dbReference>
<dbReference type="GO" id="GO:0005524">
    <property type="term" value="F:ATP binding"/>
    <property type="evidence" value="ECO:0007669"/>
    <property type="project" value="UniProtKB-KW"/>
</dbReference>
<dbReference type="GO" id="GO:0046872">
    <property type="term" value="F:metal ion binding"/>
    <property type="evidence" value="ECO:0007669"/>
    <property type="project" value="UniProtKB-KW"/>
</dbReference>
<dbReference type="GO" id="GO:0004478">
    <property type="term" value="F:methionine adenosyltransferase activity"/>
    <property type="evidence" value="ECO:0007669"/>
    <property type="project" value="UniProtKB-EC"/>
</dbReference>
<dbReference type="GO" id="GO:0006730">
    <property type="term" value="P:one-carbon metabolic process"/>
    <property type="evidence" value="ECO:0007669"/>
    <property type="project" value="UniProtKB-KW"/>
</dbReference>
<dbReference type="GO" id="GO:0006556">
    <property type="term" value="P:S-adenosylmethionine biosynthetic process"/>
    <property type="evidence" value="ECO:0007669"/>
    <property type="project" value="UniProtKB-UniPathway"/>
</dbReference>
<sequence>RPEEIGAGDQGHMFG</sequence>
<gene>
    <name type="primary">METK</name>
</gene>
<evidence type="ECO:0000250" key="1"/>
<evidence type="ECO:0000250" key="2">
    <source>
        <dbReference type="UniProtKB" id="P13444"/>
    </source>
</evidence>
<evidence type="ECO:0000250" key="3">
    <source>
        <dbReference type="UniProtKB" id="Q96551"/>
    </source>
</evidence>
<evidence type="ECO:0000305" key="4"/>
<comment type="function">
    <text evidence="3">Catalyzes the formation of S-adenosylmethionine from methionine and ATP. The reaction comprises two steps that are both catalyzed by the same enzyme: formation of S-adenosylmethionine (AdoMet) and triphosphate, and subsequent hydrolysis of the triphosphate.</text>
</comment>
<comment type="catalytic activity">
    <reaction evidence="3">
        <text>L-methionine + ATP + H2O = S-adenosyl-L-methionine + phosphate + diphosphate</text>
        <dbReference type="Rhea" id="RHEA:21080"/>
        <dbReference type="ChEBI" id="CHEBI:15377"/>
        <dbReference type="ChEBI" id="CHEBI:30616"/>
        <dbReference type="ChEBI" id="CHEBI:33019"/>
        <dbReference type="ChEBI" id="CHEBI:43474"/>
        <dbReference type="ChEBI" id="CHEBI:57844"/>
        <dbReference type="ChEBI" id="CHEBI:59789"/>
        <dbReference type="EC" id="2.5.1.6"/>
    </reaction>
</comment>
<comment type="cofactor">
    <cofactor evidence="3">
        <name>Mn(2+)</name>
        <dbReference type="ChEBI" id="CHEBI:29035"/>
    </cofactor>
    <cofactor evidence="3">
        <name>Mg(2+)</name>
        <dbReference type="ChEBI" id="CHEBI:18420"/>
    </cofactor>
    <cofactor evidence="3">
        <name>Co(2+)</name>
        <dbReference type="ChEBI" id="CHEBI:48828"/>
    </cofactor>
    <text evidence="2 3">Binds 2 divalent ions per subunit. The metal ions interact primarily with the substrate (By similarity). Can utilize magnesium, manganese or cobalt (in vitro) (By similarity).</text>
</comment>
<comment type="cofactor">
    <cofactor evidence="3">
        <name>K(+)</name>
        <dbReference type="ChEBI" id="CHEBI:29103"/>
    </cofactor>
    <text evidence="2">Binds 1 potassium ion per subunit. The potassium ion interacts primarily with the substrate (By similarity).</text>
</comment>
<comment type="pathway">
    <text evidence="3">Amino-acid biosynthesis; S-adenosyl-L-methionine biosynthesis; S-adenosyl-L-methionine from L-methionine: step 1/1.</text>
</comment>
<comment type="subunit">
    <text evidence="1">Homotetramer.</text>
</comment>
<comment type="subcellular location">
    <subcellularLocation>
        <location evidence="1">Cytoplasm</location>
    </subcellularLocation>
</comment>
<comment type="miscellaneous">
    <text>On the 2D-gel the determined pI of this unknown protein is: 5.9, its MW is: 43.3 kDa.</text>
</comment>
<comment type="similarity">
    <text evidence="4">Belongs to the AdoMet synthase family.</text>
</comment>
<reference key="1">
    <citation type="journal article" date="1996" name="Theor. Appl. Genet.">
        <title>The maize two dimensional gel protein database: towards an integrated genome analysis program.</title>
        <authorList>
            <person name="Touzet P."/>
            <person name="Riccardi F."/>
            <person name="Morin C."/>
            <person name="Damerval C."/>
            <person name="Huet J.-C."/>
            <person name="Pernollet J.-C."/>
            <person name="Zivy M."/>
            <person name="de Vienne D."/>
        </authorList>
        <dbReference type="AGRICOLA" id="IND20551642"/>
    </citation>
    <scope>PROTEIN SEQUENCE</scope>
    <source>
        <tissue>Coleoptile</tissue>
    </source>
</reference>
<feature type="chain" id="PRO_0000174467" description="Probable S-adenosylmethionine synthase">
    <location>
        <begin position="1" status="less than"/>
        <end position="15" status="greater than"/>
    </location>
</feature>
<feature type="non-terminal residue">
    <location>
        <position position="1"/>
    </location>
</feature>
<feature type="non-terminal residue">
    <location>
        <position position="15"/>
    </location>
</feature>
<name>METK_MAIZE</name>
<keyword id="KW-0067">ATP-binding</keyword>
<keyword id="KW-0170">Cobalt</keyword>
<keyword id="KW-0963">Cytoplasm</keyword>
<keyword id="KW-0903">Direct protein sequencing</keyword>
<keyword id="KW-0460">Magnesium</keyword>
<keyword id="KW-0479">Metal-binding</keyword>
<keyword id="KW-0547">Nucleotide-binding</keyword>
<keyword id="KW-0554">One-carbon metabolism</keyword>
<keyword id="KW-0630">Potassium</keyword>
<keyword id="KW-1185">Reference proteome</keyword>
<keyword id="KW-0808">Transferase</keyword>